<organism>
    <name type="scientific">Oryza sativa subsp. indica</name>
    <name type="common">Rice</name>
    <dbReference type="NCBI Taxonomy" id="39946"/>
    <lineage>
        <taxon>Eukaryota</taxon>
        <taxon>Viridiplantae</taxon>
        <taxon>Streptophyta</taxon>
        <taxon>Embryophyta</taxon>
        <taxon>Tracheophyta</taxon>
        <taxon>Spermatophyta</taxon>
        <taxon>Magnoliopsida</taxon>
        <taxon>Liliopsida</taxon>
        <taxon>Poales</taxon>
        <taxon>Poaceae</taxon>
        <taxon>BOP clade</taxon>
        <taxon>Oryzoideae</taxon>
        <taxon>Oryzeae</taxon>
        <taxon>Oryzinae</taxon>
        <taxon>Oryza</taxon>
        <taxon>Oryza sativa</taxon>
    </lineage>
</organism>
<protein>
    <recommendedName>
        <fullName>Histone H2B.10</fullName>
    </recommendedName>
</protein>
<keyword id="KW-0007">Acetylation</keyword>
<keyword id="KW-0158">Chromosome</keyword>
<keyword id="KW-0238">DNA-binding</keyword>
<keyword id="KW-1017">Isopeptide bond</keyword>
<keyword id="KW-0544">Nucleosome core</keyword>
<keyword id="KW-0539">Nucleus</keyword>
<keyword id="KW-1185">Reference proteome</keyword>
<keyword id="KW-0832">Ubl conjugation</keyword>
<reference key="1">
    <citation type="journal article" date="2005" name="PLoS Biol.">
        <title>The genomes of Oryza sativa: a history of duplications.</title>
        <authorList>
            <person name="Yu J."/>
            <person name="Wang J."/>
            <person name="Lin W."/>
            <person name="Li S."/>
            <person name="Li H."/>
            <person name="Zhou J."/>
            <person name="Ni P."/>
            <person name="Dong W."/>
            <person name="Hu S."/>
            <person name="Zeng C."/>
            <person name="Zhang J."/>
            <person name="Zhang Y."/>
            <person name="Li R."/>
            <person name="Xu Z."/>
            <person name="Li S."/>
            <person name="Li X."/>
            <person name="Zheng H."/>
            <person name="Cong L."/>
            <person name="Lin L."/>
            <person name="Yin J."/>
            <person name="Geng J."/>
            <person name="Li G."/>
            <person name="Shi J."/>
            <person name="Liu J."/>
            <person name="Lv H."/>
            <person name="Li J."/>
            <person name="Wang J."/>
            <person name="Deng Y."/>
            <person name="Ran L."/>
            <person name="Shi X."/>
            <person name="Wang X."/>
            <person name="Wu Q."/>
            <person name="Li C."/>
            <person name="Ren X."/>
            <person name="Wang J."/>
            <person name="Wang X."/>
            <person name="Li D."/>
            <person name="Liu D."/>
            <person name="Zhang X."/>
            <person name="Ji Z."/>
            <person name="Zhao W."/>
            <person name="Sun Y."/>
            <person name="Zhang Z."/>
            <person name="Bao J."/>
            <person name="Han Y."/>
            <person name="Dong L."/>
            <person name="Ji J."/>
            <person name="Chen P."/>
            <person name="Wu S."/>
            <person name="Liu J."/>
            <person name="Xiao Y."/>
            <person name="Bu D."/>
            <person name="Tan J."/>
            <person name="Yang L."/>
            <person name="Ye C."/>
            <person name="Zhang J."/>
            <person name="Xu J."/>
            <person name="Zhou Y."/>
            <person name="Yu Y."/>
            <person name="Zhang B."/>
            <person name="Zhuang S."/>
            <person name="Wei H."/>
            <person name="Liu B."/>
            <person name="Lei M."/>
            <person name="Yu H."/>
            <person name="Li Y."/>
            <person name="Xu H."/>
            <person name="Wei S."/>
            <person name="He X."/>
            <person name="Fang L."/>
            <person name="Zhang Z."/>
            <person name="Zhang Y."/>
            <person name="Huang X."/>
            <person name="Su Z."/>
            <person name="Tong W."/>
            <person name="Li J."/>
            <person name="Tong Z."/>
            <person name="Li S."/>
            <person name="Ye J."/>
            <person name="Wang L."/>
            <person name="Fang L."/>
            <person name="Lei T."/>
            <person name="Chen C.-S."/>
            <person name="Chen H.-C."/>
            <person name="Xu Z."/>
            <person name="Li H."/>
            <person name="Huang H."/>
            <person name="Zhang F."/>
            <person name="Xu H."/>
            <person name="Li N."/>
            <person name="Zhao C."/>
            <person name="Li S."/>
            <person name="Dong L."/>
            <person name="Huang Y."/>
            <person name="Li L."/>
            <person name="Xi Y."/>
            <person name="Qi Q."/>
            <person name="Li W."/>
            <person name="Zhang B."/>
            <person name="Hu W."/>
            <person name="Zhang Y."/>
            <person name="Tian X."/>
            <person name="Jiao Y."/>
            <person name="Liang X."/>
            <person name="Jin J."/>
            <person name="Gao L."/>
            <person name="Zheng W."/>
            <person name="Hao B."/>
            <person name="Liu S.-M."/>
            <person name="Wang W."/>
            <person name="Yuan L."/>
            <person name="Cao M."/>
            <person name="McDermott J."/>
            <person name="Samudrala R."/>
            <person name="Wang J."/>
            <person name="Wong G.K.-S."/>
            <person name="Yang H."/>
        </authorList>
    </citation>
    <scope>NUCLEOTIDE SEQUENCE [LARGE SCALE GENOMIC DNA]</scope>
    <source>
        <strain>cv. 93-11</strain>
    </source>
</reference>
<accession>A2WKS3</accession>
<evidence type="ECO:0000250" key="1"/>
<evidence type="ECO:0000256" key="2">
    <source>
        <dbReference type="SAM" id="MobiDB-lite"/>
    </source>
</evidence>
<evidence type="ECO:0000305" key="3"/>
<proteinExistence type="inferred from homology"/>
<gene>
    <name type="primary">H2B.10</name>
    <name type="ORF">OsI_000416</name>
</gene>
<name>H2B10_ORYSI</name>
<comment type="function">
    <text>Core component of nucleosome. Nucleosomes wrap and compact DNA into chromatin, limiting DNA accessibility to the cellular machineries which require DNA as a template. Histones thereby play a central role in transcription regulation, DNA repair, DNA replication and chromosomal stability. DNA accessibility is regulated via a complex set of post-translational modifications of histones, also called histone code, and nucleosome remodeling.</text>
</comment>
<comment type="subunit">
    <text>The nucleosome is a histone octamer containing two molecules each of H2A, H2B, H3 and H4 assembled in one H3-H4 heterotetramer and two H2A-H2B heterodimers. The octamer wraps approximately 147 bp of DNA.</text>
</comment>
<comment type="subcellular location">
    <subcellularLocation>
        <location evidence="1">Nucleus</location>
    </subcellularLocation>
    <subcellularLocation>
        <location evidence="1">Chromosome</location>
    </subcellularLocation>
</comment>
<comment type="PTM">
    <text evidence="1">Can be acetylated to form H2BK6ac and H2BK33ac.</text>
</comment>
<comment type="PTM">
    <text evidence="1">Monoubiquitinated by BRE1 to form H2BK143ub1 and deubiquitinated by UBP26. Required for heterochromatic histone H3 di- and trimethylation at H3K4me. May give a specific tag for epigenetic transcriptional activation (By similarity).</text>
</comment>
<comment type="similarity">
    <text evidence="3">Belongs to the histone H2B family.</text>
</comment>
<comment type="caution">
    <text evidence="3">To ensure consistency between histone entries, we follow the 'Brno' nomenclature for histone modifications, with positions referring to those used in the literature for the 'closest' model organism. Due to slight variations in histone sequences between organisms and to the presence of initiator methionine in UniProtKB/Swiss-Prot sequences, the actual positions of modified amino acids in the sequence generally differ. In this entry the following conventions are used: H2BK6ac = acetylated Lys-7; H2BK33ac = acetylated Lys-37; H2BK143ub1 = monoubiquitinated Lys-149.</text>
</comment>
<sequence>MAPKAEKKPAAKKPAEEEPAAEKAEKAPAGKKPKAEKRLPAGKAEKSSGEGKKAGRKKAKKSVETYKIYIFKVLKQVHPDIGISSKAMSIMNSFINDIFEKLAGESAKLARYNKKPTITSREIQTSVRLVLPGELAKHAVSEGTKAVTKFTSA</sequence>
<feature type="initiator methionine" description="Removed" evidence="1">
    <location>
        <position position="1"/>
    </location>
</feature>
<feature type="chain" id="PRO_0000294194" description="Histone H2B.10">
    <location>
        <begin position="2"/>
        <end position="153"/>
    </location>
</feature>
<feature type="region of interest" description="Disordered" evidence="2">
    <location>
        <begin position="1"/>
        <end position="61"/>
    </location>
</feature>
<feature type="compositionally biased region" description="Basic and acidic residues" evidence="2">
    <location>
        <begin position="1"/>
        <end position="28"/>
    </location>
</feature>
<feature type="compositionally biased region" description="Basic and acidic residues" evidence="2">
    <location>
        <begin position="36"/>
        <end position="53"/>
    </location>
</feature>
<feature type="modified residue" description="N6-acetyllysine" evidence="1">
    <location>
        <position position="7"/>
    </location>
</feature>
<feature type="modified residue" description="N6-acetyllysine" evidence="1">
    <location>
        <position position="37"/>
    </location>
</feature>
<feature type="cross-link" description="Glycyl lysine isopeptide (Lys-Gly) (interchain with G-Cter in ubiquitin)" evidence="1">
    <location>
        <position position="149"/>
    </location>
</feature>
<dbReference type="EMBL" id="CM000126">
    <property type="protein sequence ID" value="EAY72569.1"/>
    <property type="molecule type" value="Genomic_DNA"/>
</dbReference>
<dbReference type="SMR" id="A2WKS3"/>
<dbReference type="STRING" id="39946.A2WKS3"/>
<dbReference type="EnsemblPlants" id="BGIOSGA002381-TA">
    <property type="protein sequence ID" value="BGIOSGA002381-PA"/>
    <property type="gene ID" value="BGIOSGA002381"/>
</dbReference>
<dbReference type="EnsemblPlants" id="OsIR64_01g0003620.01">
    <property type="protein sequence ID" value="OsIR64_01g0003620.01"/>
    <property type="gene ID" value="OsIR64_01g0003620"/>
</dbReference>
<dbReference type="EnsemblPlants" id="OsLiXu_01g0003670.01">
    <property type="protein sequence ID" value="OsLiXu_01g0003670.01"/>
    <property type="gene ID" value="OsLiXu_01g0003670"/>
</dbReference>
<dbReference type="EnsemblPlants" id="OsMH63_01G003780_01">
    <property type="protein sequence ID" value="OsMH63_01G003780_01"/>
    <property type="gene ID" value="OsMH63_01G003780"/>
</dbReference>
<dbReference type="EnsemblPlants" id="OsPr106_01g0003690.01">
    <property type="protein sequence ID" value="OsPr106_01g0003690.01"/>
    <property type="gene ID" value="OsPr106_01g0003690"/>
</dbReference>
<dbReference type="EnsemblPlants" id="OsZS97_01G003540_01">
    <property type="protein sequence ID" value="OsZS97_01G003540_01"/>
    <property type="gene ID" value="OsZS97_01G003540"/>
</dbReference>
<dbReference type="Gramene" id="BGIOSGA002381-TA">
    <property type="protein sequence ID" value="BGIOSGA002381-PA"/>
    <property type="gene ID" value="BGIOSGA002381"/>
</dbReference>
<dbReference type="Gramene" id="OsIR64_01g0003620.01">
    <property type="protein sequence ID" value="OsIR64_01g0003620.01"/>
    <property type="gene ID" value="OsIR64_01g0003620"/>
</dbReference>
<dbReference type="Gramene" id="OsLiXu_01g0003670.01">
    <property type="protein sequence ID" value="OsLiXu_01g0003670.01"/>
    <property type="gene ID" value="OsLiXu_01g0003670"/>
</dbReference>
<dbReference type="Gramene" id="OsMH63_01G003780_01">
    <property type="protein sequence ID" value="OsMH63_01G003780_01"/>
    <property type="gene ID" value="OsMH63_01G003780"/>
</dbReference>
<dbReference type="Gramene" id="OsPr106_01g0003690.01">
    <property type="protein sequence ID" value="OsPr106_01g0003690.01"/>
    <property type="gene ID" value="OsPr106_01g0003690"/>
</dbReference>
<dbReference type="Gramene" id="OsZS97_01G003540_01">
    <property type="protein sequence ID" value="OsZS97_01G003540_01"/>
    <property type="gene ID" value="OsZS97_01G003540"/>
</dbReference>
<dbReference type="HOGENOM" id="CLU_075666_1_0_1"/>
<dbReference type="OMA" id="RSKENWH"/>
<dbReference type="Proteomes" id="UP000007015">
    <property type="component" value="Chromosome 1"/>
</dbReference>
<dbReference type="GO" id="GO:0000786">
    <property type="term" value="C:nucleosome"/>
    <property type="evidence" value="ECO:0007669"/>
    <property type="project" value="UniProtKB-KW"/>
</dbReference>
<dbReference type="GO" id="GO:0005634">
    <property type="term" value="C:nucleus"/>
    <property type="evidence" value="ECO:0007669"/>
    <property type="project" value="UniProtKB-SubCell"/>
</dbReference>
<dbReference type="GO" id="GO:0003677">
    <property type="term" value="F:DNA binding"/>
    <property type="evidence" value="ECO:0007669"/>
    <property type="project" value="UniProtKB-KW"/>
</dbReference>
<dbReference type="GO" id="GO:0046982">
    <property type="term" value="F:protein heterodimerization activity"/>
    <property type="evidence" value="ECO:0007669"/>
    <property type="project" value="InterPro"/>
</dbReference>
<dbReference type="GO" id="GO:0030527">
    <property type="term" value="F:structural constituent of chromatin"/>
    <property type="evidence" value="ECO:0007669"/>
    <property type="project" value="InterPro"/>
</dbReference>
<dbReference type="CDD" id="cd22910">
    <property type="entry name" value="HFD_H2B"/>
    <property type="match status" value="1"/>
</dbReference>
<dbReference type="FunFam" id="1.10.20.10:FF:000014">
    <property type="entry name" value="Histone H2B"/>
    <property type="match status" value="1"/>
</dbReference>
<dbReference type="Gene3D" id="1.10.20.10">
    <property type="entry name" value="Histone, subunit A"/>
    <property type="match status" value="1"/>
</dbReference>
<dbReference type="InterPro" id="IPR009072">
    <property type="entry name" value="Histone-fold"/>
</dbReference>
<dbReference type="InterPro" id="IPR007125">
    <property type="entry name" value="Histone_H2A/H2B/H3"/>
</dbReference>
<dbReference type="InterPro" id="IPR000558">
    <property type="entry name" value="Histone_H2B"/>
</dbReference>
<dbReference type="InterPro" id="IPR055333">
    <property type="entry name" value="HISTONE_H2B_site"/>
</dbReference>
<dbReference type="PANTHER" id="PTHR23428">
    <property type="entry name" value="HISTONE H2B"/>
    <property type="match status" value="1"/>
</dbReference>
<dbReference type="Pfam" id="PF00125">
    <property type="entry name" value="Histone"/>
    <property type="match status" value="1"/>
</dbReference>
<dbReference type="PRINTS" id="PR00621">
    <property type="entry name" value="HISTONEH2B"/>
</dbReference>
<dbReference type="SMART" id="SM00427">
    <property type="entry name" value="H2B"/>
    <property type="match status" value="1"/>
</dbReference>
<dbReference type="SUPFAM" id="SSF47113">
    <property type="entry name" value="Histone-fold"/>
    <property type="match status" value="1"/>
</dbReference>
<dbReference type="PROSITE" id="PS00357">
    <property type="entry name" value="HISTONE_H2B"/>
    <property type="match status" value="1"/>
</dbReference>